<organismHost>
    <name type="scientific">Saccharolobus islandicus</name>
    <name type="common">Sulfolobus islandicus</name>
    <dbReference type="NCBI Taxonomy" id="43080"/>
</organismHost>
<name>CAPS2_SIFVH</name>
<keyword id="KW-0002">3D-structure</keyword>
<keyword id="KW-0238">DNA-binding</keyword>
<keyword id="KW-1185">Reference proteome</keyword>
<keyword id="KW-0946">Virion</keyword>
<evidence type="ECO:0000269" key="1">
    <source>
    </source>
</evidence>
<evidence type="ECO:0007744" key="2">
    <source>
        <dbReference type="PDB" id="6WQ2"/>
    </source>
</evidence>
<accession>Q914J5</accession>
<protein>
    <recommendedName>
        <fullName>Major capsid protein 2</fullName>
    </recommendedName>
    <alternativeName>
        <fullName>MCP2</fullName>
    </alternativeName>
</protein>
<dbReference type="EMBL" id="AF440571">
    <property type="protein sequence ID" value="AAL27746.1"/>
    <property type="molecule type" value="Genomic_DNA"/>
</dbReference>
<dbReference type="RefSeq" id="NP_445700.1">
    <property type="nucleotide sequence ID" value="NC_003214.2"/>
</dbReference>
<dbReference type="PDB" id="6WQ2">
    <property type="method" value="EM"/>
    <property type="resolution" value="4.00 A"/>
    <property type="chains" value="A/B/C/D/E/F/G/H/I/J/K/L/M/N/P/R/T=1-167"/>
</dbReference>
<dbReference type="PDBsum" id="6WQ2"/>
<dbReference type="EMDB" id="EMD-21868"/>
<dbReference type="SMR" id="Q914J5"/>
<dbReference type="GeneID" id="922296"/>
<dbReference type="KEGG" id="vg:922296"/>
<dbReference type="Proteomes" id="UP000007017">
    <property type="component" value="Segment"/>
</dbReference>
<dbReference type="GO" id="GO:0019029">
    <property type="term" value="C:helical viral capsid"/>
    <property type="evidence" value="ECO:0000314"/>
    <property type="project" value="UniProtKB"/>
</dbReference>
<dbReference type="GO" id="GO:0003677">
    <property type="term" value="F:DNA binding"/>
    <property type="evidence" value="ECO:0000314"/>
    <property type="project" value="UniProtKB"/>
</dbReference>
<feature type="chain" id="PRO_0000385447" description="Major capsid protein 2">
    <location>
        <begin position="1"/>
        <end position="167"/>
    </location>
</feature>
<reference key="1">
    <citation type="journal article" date="2000" name="Virology">
        <title>A novel lipothrixvirus, SIFV, of the extremely thermophilic crenarchaeon Sulfolobus.</title>
        <authorList>
            <person name="Arnold H.P."/>
            <person name="Zillig W."/>
            <person name="Ziese U."/>
            <person name="Holz I."/>
            <person name="Crosby M."/>
            <person name="Utterback T."/>
            <person name="Weidmann J.F."/>
            <person name="Umayam L.A."/>
            <person name="Teffera K."/>
            <person name="Kristjanson J.K."/>
            <person name="Klenk H.P."/>
            <person name="Nelson K.E."/>
            <person name="Fraser C.M."/>
        </authorList>
    </citation>
    <scope>NUCLEOTIDE SEQUENCE [GENOMIC DNA]</scope>
</reference>
<reference evidence="2" key="2">
    <citation type="journal article" date="2020" name="Proc. Natl. Acad. Sci. U.S.A.">
        <title>Structures of filamentous viruses infecting hyperthermophilic archaea explain DNA stabilization in extreme environments.</title>
        <authorList>
            <person name="Wang F."/>
            <person name="Baquero D.P."/>
            <person name="Beltran L.C."/>
            <person name="Su Z."/>
            <person name="Osinski T."/>
            <person name="Zheng W."/>
            <person name="Prangishvili D."/>
            <person name="Krupovic M."/>
            <person name="Egelman E.H."/>
        </authorList>
    </citation>
    <scope>STRUCTURE BY ELECTRON MICROSCOPY (4.00 ANGSTROMS)</scope>
    <scope>SUBUNIT</scope>
    <scope>DOMAIN</scope>
    <scope>FUNCTION</scope>
    <scope>SUBCELLULAR LOCATION</scope>
</reference>
<proteinExistence type="evidence at protein level"/>
<gene>
    <name type="primary">SIFV0035</name>
</gene>
<sequence length="167" mass="18876">MARRNRRLSSASVYRYYLKRISMNIGTTGHVNGLSIAGNPEIMRAIARLSEQETYNWVTDYAPSHLAKEVVKQISGKYNIPGAYQGLLMAFAEKVLANYILDYKGEPLVEIHHNFLWELMQRQSGAGLGVTSGFIYTFVRKDGKPVTVDMSKVLTEIEDALFKLVKK</sequence>
<organism>
    <name type="scientific">Sulfolobus islandicus filamentous virus (isolate Iceland/Hveragerdi)</name>
    <name type="common">SIFV</name>
    <dbReference type="NCBI Taxonomy" id="654908"/>
    <lineage>
        <taxon>Viruses</taxon>
        <taxon>Adnaviria</taxon>
        <taxon>Zilligvirae</taxon>
        <taxon>Taleaviricota</taxon>
        <taxon>Tokiviricetes</taxon>
        <taxon>Ligamenvirales</taxon>
        <taxon>Lipothrixviridae</taxon>
        <taxon>Betalipothrixvirus</taxon>
        <taxon>Sulfolobus islandicus filamentous virus</taxon>
    </lineage>
</organism>
<comment type="function">
    <text evidence="1">Self-assembles to form a helical, filamentous nucleocapsid mesuring 1980 nm in length and 24 nm in width. Together with capsid protein 1, wraps arounds the DNA and maintains it in an A-form. Capsid proteins probably maintain the DNA in A-form by non-specific desolvation and specific coordination of the DNA phosphate groups by positively charged residues. This certainly protects the viral DNA under conditions such as the extreme desiccation of its host.</text>
</comment>
<comment type="subunit">
    <text evidence="1">Heterodimer composed of major capsid protein 1 and major capsid protein 2.</text>
</comment>
<comment type="subcellular location">
    <subcellularLocation>
        <location evidence="1">Virion</location>
    </subcellularLocation>
</comment>
<comment type="domain">
    <text evidence="1">The N-terminus projects into a DNA groove.</text>
</comment>